<feature type="chain" id="PRO_0000184155" description="Transcriptional regulator GadE">
    <location>
        <begin position="1"/>
        <end position="175"/>
    </location>
</feature>
<feature type="domain" description="HTH luxR-type" evidence="1">
    <location>
        <begin position="109"/>
        <end position="174"/>
    </location>
</feature>
<feature type="DNA-binding region" description="H-T-H motif" evidence="1">
    <location>
        <begin position="133"/>
        <end position="152"/>
    </location>
</feature>
<evidence type="ECO:0000255" key="1">
    <source>
        <dbReference type="PROSITE-ProRule" id="PRU00411"/>
    </source>
</evidence>
<evidence type="ECO:0000269" key="2">
    <source>
    </source>
</evidence>
<evidence type="ECO:0000269" key="3">
    <source>
    </source>
</evidence>
<evidence type="ECO:0000269" key="4">
    <source>
    </source>
</evidence>
<evidence type="ECO:0000269" key="5">
    <source>
    </source>
</evidence>
<evidence type="ECO:0000269" key="6">
    <source>
    </source>
</evidence>
<dbReference type="EMBL" id="U00039">
    <property type="protein sequence ID" value="AAB18488.1"/>
    <property type="molecule type" value="Genomic_DNA"/>
</dbReference>
<dbReference type="EMBL" id="U00096">
    <property type="protein sequence ID" value="AAC76537.1"/>
    <property type="molecule type" value="Genomic_DNA"/>
</dbReference>
<dbReference type="EMBL" id="AP009048">
    <property type="protein sequence ID" value="BAE77782.1"/>
    <property type="molecule type" value="Genomic_DNA"/>
</dbReference>
<dbReference type="EMBL" id="D11389">
    <property type="status" value="NOT_ANNOTATED_CDS"/>
    <property type="molecule type" value="Genomic_DNA"/>
</dbReference>
<dbReference type="PIR" id="S47732">
    <property type="entry name" value="S47732"/>
</dbReference>
<dbReference type="RefSeq" id="NP_417969.1">
    <property type="nucleotide sequence ID" value="NC_000913.3"/>
</dbReference>
<dbReference type="RefSeq" id="WP_000576690.1">
    <property type="nucleotide sequence ID" value="NZ_STEB01000046.1"/>
</dbReference>
<dbReference type="SMR" id="P63204"/>
<dbReference type="BioGRID" id="4262519">
    <property type="interactions" value="86"/>
</dbReference>
<dbReference type="ComplexPortal" id="CPX-5781">
    <property type="entry name" value="gadE-rcsB DNA-binding transcription factor complex"/>
</dbReference>
<dbReference type="DIP" id="DIP-48091N"/>
<dbReference type="FunCoup" id="P63204">
    <property type="interactions" value="70"/>
</dbReference>
<dbReference type="IntAct" id="P63204">
    <property type="interactions" value="2"/>
</dbReference>
<dbReference type="STRING" id="511145.b3512"/>
<dbReference type="jPOST" id="P63204"/>
<dbReference type="PaxDb" id="511145-b3512"/>
<dbReference type="EnsemblBacteria" id="AAC76537">
    <property type="protein sequence ID" value="AAC76537"/>
    <property type="gene ID" value="b3512"/>
</dbReference>
<dbReference type="GeneID" id="93778473"/>
<dbReference type="GeneID" id="948023"/>
<dbReference type="KEGG" id="ecj:JW3480"/>
<dbReference type="KEGG" id="eco:b3512"/>
<dbReference type="KEGG" id="ecoc:C3026_19025"/>
<dbReference type="PATRIC" id="fig|511145.12.peg.3619"/>
<dbReference type="EchoBASE" id="EB1506"/>
<dbReference type="eggNOG" id="COG2771">
    <property type="taxonomic scope" value="Bacteria"/>
</dbReference>
<dbReference type="HOGENOM" id="CLU_1522892_0_0_6"/>
<dbReference type="InParanoid" id="P63204"/>
<dbReference type="OMA" id="YFINRNE"/>
<dbReference type="OrthoDB" id="6571377at2"/>
<dbReference type="BioCyc" id="EcoCyc:EG11544-MONOMER"/>
<dbReference type="PRO" id="PR:P63204"/>
<dbReference type="Proteomes" id="UP000000625">
    <property type="component" value="Chromosome"/>
</dbReference>
<dbReference type="GO" id="GO:0005667">
    <property type="term" value="C:transcription regulator complex"/>
    <property type="evidence" value="ECO:0000353"/>
    <property type="project" value="ComplexPortal"/>
</dbReference>
<dbReference type="GO" id="GO:0003677">
    <property type="term" value="F:DNA binding"/>
    <property type="evidence" value="ECO:0000314"/>
    <property type="project" value="EcoCyc"/>
</dbReference>
<dbReference type="GO" id="GO:1990451">
    <property type="term" value="P:cellular stress response to acidic pH"/>
    <property type="evidence" value="ECO:0000314"/>
    <property type="project" value="ComplexPortal"/>
</dbReference>
<dbReference type="GO" id="GO:0006355">
    <property type="term" value="P:regulation of DNA-templated transcription"/>
    <property type="evidence" value="ECO:0000314"/>
    <property type="project" value="ComplexPortal"/>
</dbReference>
<dbReference type="Gene3D" id="1.10.10.10">
    <property type="entry name" value="Winged helix-like DNA-binding domain superfamily/Winged helix DNA-binding domain"/>
    <property type="match status" value="1"/>
</dbReference>
<dbReference type="InterPro" id="IPR016032">
    <property type="entry name" value="Sig_transdc_resp-reg_C-effctor"/>
</dbReference>
<dbReference type="InterPro" id="IPR000792">
    <property type="entry name" value="Tscrpt_reg_LuxR_C"/>
</dbReference>
<dbReference type="InterPro" id="IPR036388">
    <property type="entry name" value="WH-like_DNA-bd_sf"/>
</dbReference>
<dbReference type="Pfam" id="PF00196">
    <property type="entry name" value="GerE"/>
    <property type="match status" value="1"/>
</dbReference>
<dbReference type="SUPFAM" id="SSF46894">
    <property type="entry name" value="C-terminal effector domain of the bipartite response regulators"/>
    <property type="match status" value="1"/>
</dbReference>
<dbReference type="PROSITE" id="PS50043">
    <property type="entry name" value="HTH_LUXR_2"/>
    <property type="match status" value="1"/>
</dbReference>
<proteinExistence type="evidence at protein level"/>
<name>GADE_ECOLI</name>
<keyword id="KW-0010">Activator</keyword>
<keyword id="KW-0903">Direct protein sequencing</keyword>
<keyword id="KW-0238">DNA-binding</keyword>
<keyword id="KW-1185">Reference proteome</keyword>
<keyword id="KW-0346">Stress response</keyword>
<keyword id="KW-0804">Transcription</keyword>
<keyword id="KW-0805">Transcription regulation</keyword>
<gene>
    <name type="primary">gadE</name>
    <name type="synonym">yhiE</name>
    <name type="synonym">yhiT</name>
    <name type="ordered locus">b3512</name>
    <name type="ordered locus">JW3480</name>
</gene>
<reference key="1">
    <citation type="journal article" date="1994" name="Nucleic Acids Res.">
        <title>Analysis of the Escherichia coli genome. V. DNA sequence of the region from 76.0 to 81.5 minutes.</title>
        <authorList>
            <person name="Sofia H.J."/>
            <person name="Burland V."/>
            <person name="Daniels D.L."/>
            <person name="Plunkett G. III"/>
            <person name="Blattner F.R."/>
        </authorList>
    </citation>
    <scope>NUCLEOTIDE SEQUENCE [LARGE SCALE GENOMIC DNA]</scope>
    <source>
        <strain>K12 / MG1655 / ATCC 47076</strain>
    </source>
</reference>
<reference key="2">
    <citation type="journal article" date="1997" name="Science">
        <title>The complete genome sequence of Escherichia coli K-12.</title>
        <authorList>
            <person name="Blattner F.R."/>
            <person name="Plunkett G. III"/>
            <person name="Bloch C.A."/>
            <person name="Perna N.T."/>
            <person name="Burland V."/>
            <person name="Riley M."/>
            <person name="Collado-Vides J."/>
            <person name="Glasner J.D."/>
            <person name="Rode C.K."/>
            <person name="Mayhew G.F."/>
            <person name="Gregor J."/>
            <person name="Davis N.W."/>
            <person name="Kirkpatrick H.A."/>
            <person name="Goeden M.A."/>
            <person name="Rose D.J."/>
            <person name="Mau B."/>
            <person name="Shao Y."/>
        </authorList>
    </citation>
    <scope>NUCLEOTIDE SEQUENCE [LARGE SCALE GENOMIC DNA]</scope>
    <source>
        <strain>K12 / MG1655 / ATCC 47076</strain>
    </source>
</reference>
<reference key="3">
    <citation type="journal article" date="2006" name="Mol. Syst. Biol.">
        <title>Highly accurate genome sequences of Escherichia coli K-12 strains MG1655 and W3110.</title>
        <authorList>
            <person name="Hayashi K."/>
            <person name="Morooka N."/>
            <person name="Yamamoto Y."/>
            <person name="Fujita K."/>
            <person name="Isono K."/>
            <person name="Choi S."/>
            <person name="Ohtsubo E."/>
            <person name="Baba T."/>
            <person name="Wanner B.L."/>
            <person name="Mori H."/>
            <person name="Horiuchi T."/>
        </authorList>
    </citation>
    <scope>NUCLEOTIDE SEQUENCE [LARGE SCALE GENOMIC DNA]</scope>
    <source>
        <strain>K12 / W3110 / ATCC 27325 / DSM 5911</strain>
    </source>
</reference>
<reference key="4">
    <citation type="journal article" date="1993" name="J. Bacteriol.">
        <title>Physical map location of a set of Escherichia coli genes (hde) whose expression is affected by the nucleoid protein H-NS.</title>
        <authorList>
            <person name="Yoshida T."/>
            <person name="Ueguchi C."/>
            <person name="Mizuno T."/>
        </authorList>
    </citation>
    <scope>NUCLEOTIDE SEQUENCE [GENOMIC DNA] OF 1-111</scope>
    <source>
        <strain>K12</strain>
    </source>
</reference>
<reference key="5">
    <citation type="journal article" date="2002" name="J. Bacteriol.">
        <title>Escherichia coli gene expression responsive to levels of the response regulator EvgA.</title>
        <authorList>
            <person name="Masuda N."/>
            <person name="Church G.M."/>
        </authorList>
    </citation>
    <scope>INDUCTION</scope>
    <source>
        <strain>K12 / MG1655 / ATCC 47076</strain>
    </source>
</reference>
<reference key="6">
    <citation type="journal article" date="2003" name="Mol. Microbiol.">
        <title>Regulatory network of acid resistance genes in Escherichia coli.</title>
        <authorList>
            <person name="Masuda N."/>
            <person name="Church G.M."/>
        </authorList>
    </citation>
    <scope>INDUCTION</scope>
    <source>
        <strain>K12 / MG1655 / ATCC 47076</strain>
    </source>
</reference>
<reference key="7">
    <citation type="journal article" date="2003" name="Mol. Microbiol.">
        <title>GadE (YhiE) activates glutamate decarboxylase-dependent acid resistance in Escherichia coli K-12.</title>
        <authorList>
            <person name="Ma Z."/>
            <person name="Gong S."/>
            <person name="Richard H."/>
            <person name="Tucker D.L."/>
            <person name="Conway T."/>
            <person name="Foster J.W."/>
        </authorList>
    </citation>
    <scope>FUNCTION</scope>
    <source>
        <strain>K12</strain>
    </source>
</reference>
<reference key="8">
    <citation type="journal article" date="2004" name="Microbiology">
        <title>GadE (YhiE): a novel activator involved in the response to acid environment in Escherichia coli.</title>
        <authorList>
            <person name="Hommais F."/>
            <person name="Krin E."/>
            <person name="Coppee J.-Y."/>
            <person name="Lacroix C."/>
            <person name="Yeramian E."/>
            <person name="Danchin A."/>
            <person name="Bertin P."/>
        </authorList>
    </citation>
    <scope>FUNCTION</scope>
    <source>
        <strain>FB8</strain>
    </source>
</reference>
<reference key="9">
    <citation type="journal article" date="2018" name="Biochemistry">
        <title>Comparative membrane proteomics reveals a nonannotated E. coli heat shock protein.</title>
        <authorList>
            <person name="Yuan P."/>
            <person name="D'Lima N.G."/>
            <person name="Slavoff S.A."/>
        </authorList>
    </citation>
    <scope>PROTEIN SEQUENCE OF 46-59</scope>
    <scope>INDUCTION BY HEAT SHOCK</scope>
    <source>
        <strain>K12 / MG1655 / ATCC 47076</strain>
    </source>
</reference>
<organism>
    <name type="scientific">Escherichia coli (strain K12)</name>
    <dbReference type="NCBI Taxonomy" id="83333"/>
    <lineage>
        <taxon>Bacteria</taxon>
        <taxon>Pseudomonadati</taxon>
        <taxon>Pseudomonadota</taxon>
        <taxon>Gammaproteobacteria</taxon>
        <taxon>Enterobacterales</taxon>
        <taxon>Enterobacteriaceae</taxon>
        <taxon>Escherichia</taxon>
    </lineage>
</organism>
<comment type="function">
    <text evidence="4 5">Regulates the expression of several genes involved in acid resistance. Required for the expression of gadA and gadBC, among others, regardless of media or growth conditions. Binds directly to the 20 bp GAD box found in the control regions of both loci.</text>
</comment>
<comment type="induction">
    <text evidence="2 3 6">By acidic conditions (PubMed:12694615). Could be induced by EvgA via the induction of YdeO (PubMed:12399493). By heat shock (shift from 30 to 45 degrees Celsius) (at protein level) (PubMed:29039649).</text>
</comment>
<sequence>MIFLMTKDSFLLQGFWQLKDNHEMIKINSLSEIKKVGNKPFKVIIDTYHNHILDEEAIKFLEKLDAERIIVLAPYHISKLKAKAPIYFVSRKESIKNLLEITYGKHLPHKNSQLCFSHNQFKIMQLILKNKNESNITSTLNISQQTLKIQKFNIMYKLKLRRMSDIVTLGITSYF</sequence>
<protein>
    <recommendedName>
        <fullName>Transcriptional regulator GadE</fullName>
    </recommendedName>
</protein>
<accession>P63204</accession>
<accession>P29688</accession>
<accession>Q2M7H4</accession>